<evidence type="ECO:0000255" key="1"/>
<evidence type="ECO:0000269" key="2">
    <source>
    </source>
</evidence>
<evidence type="ECO:0000303" key="3">
    <source>
    </source>
</evidence>
<evidence type="ECO:0000305" key="4"/>
<evidence type="ECO:0000312" key="5">
    <source>
        <dbReference type="Proteomes" id="UP000001940"/>
    </source>
</evidence>
<evidence type="ECO:0000312" key="6">
    <source>
        <dbReference type="WormBase" id="Y47D7A.16a"/>
    </source>
</evidence>
<feature type="chain" id="PRO_0000442703" description="Riboflavin transporter rft-1">
    <location>
        <begin position="1"/>
        <end position="427"/>
    </location>
</feature>
<feature type="topological domain" description="Cytoplasmic" evidence="4">
    <location>
        <begin position="1"/>
        <end position="2"/>
    </location>
</feature>
<feature type="transmembrane region" description="Helical" evidence="1">
    <location>
        <begin position="3"/>
        <end position="23"/>
    </location>
</feature>
<feature type="topological domain" description="Extracellular" evidence="4">
    <location>
        <begin position="24"/>
        <end position="42"/>
    </location>
</feature>
<feature type="transmembrane region" description="Helical" evidence="1">
    <location>
        <begin position="43"/>
        <end position="63"/>
    </location>
</feature>
<feature type="topological domain" description="Cytoplasmic" evidence="4">
    <location>
        <begin position="64"/>
        <end position="73"/>
    </location>
</feature>
<feature type="transmembrane region" description="Helical" evidence="1">
    <location>
        <begin position="74"/>
        <end position="94"/>
    </location>
</feature>
<feature type="topological domain" description="Extracellular" evidence="4">
    <location>
        <begin position="95"/>
        <end position="111"/>
    </location>
</feature>
<feature type="transmembrane region" description="Helical" evidence="1">
    <location>
        <begin position="112"/>
        <end position="132"/>
    </location>
</feature>
<feature type="topological domain" description="Cytoplasmic" evidence="4">
    <location>
        <begin position="133"/>
        <end position="139"/>
    </location>
</feature>
<feature type="transmembrane region" description="Helical" evidence="1">
    <location>
        <begin position="140"/>
        <end position="160"/>
    </location>
</feature>
<feature type="topological domain" description="Extracellular" evidence="4">
    <location>
        <begin position="161"/>
        <end position="184"/>
    </location>
</feature>
<feature type="transmembrane region" description="Helical" evidence="1">
    <location>
        <begin position="185"/>
        <end position="205"/>
    </location>
</feature>
<feature type="topological domain" description="Cytoplasmic" evidence="4">
    <location>
        <begin position="206"/>
        <end position="261"/>
    </location>
</feature>
<feature type="transmembrane region" description="Helical" evidence="1">
    <location>
        <begin position="262"/>
        <end position="282"/>
    </location>
</feature>
<feature type="topological domain" description="Extracellular" evidence="4">
    <location>
        <begin position="283"/>
        <end position="297"/>
    </location>
</feature>
<feature type="transmembrane region" description="Helical" evidence="1">
    <location>
        <begin position="298"/>
        <end position="318"/>
    </location>
</feature>
<feature type="topological domain" description="Cytoplasmic" evidence="4">
    <location>
        <begin position="319"/>
        <end position="322"/>
    </location>
</feature>
<feature type="transmembrane region" description="Helical" evidence="1">
    <location>
        <begin position="323"/>
        <end position="343"/>
    </location>
</feature>
<feature type="topological domain" description="Extracellular" evidence="4">
    <location>
        <begin position="344"/>
        <end position="353"/>
    </location>
</feature>
<feature type="transmembrane region" description="Helical" evidence="1">
    <location>
        <begin position="354"/>
        <end position="374"/>
    </location>
</feature>
<feature type="topological domain" description="Cytoplasmic" evidence="4">
    <location>
        <begin position="375"/>
        <end position="391"/>
    </location>
</feature>
<feature type="transmembrane region" description="Helical" evidence="1">
    <location>
        <begin position="392"/>
        <end position="412"/>
    </location>
</feature>
<feature type="topological domain" description="Extracellular" evidence="4">
    <location>
        <begin position="413"/>
        <end position="427"/>
    </location>
</feature>
<dbReference type="EMBL" id="BX284605">
    <property type="protein sequence ID" value="CCD69385.2"/>
    <property type="molecule type" value="Genomic_DNA"/>
</dbReference>
<dbReference type="RefSeq" id="NP_001033515.2">
    <property type="nucleotide sequence ID" value="NM_001038426.4"/>
</dbReference>
<dbReference type="SMR" id="Q3LFN0"/>
<dbReference type="FunCoup" id="Q3LFN0">
    <property type="interactions" value="917"/>
</dbReference>
<dbReference type="STRING" id="6239.Y47D7A.16a.1"/>
<dbReference type="PaxDb" id="6239-Y47D7A.16"/>
<dbReference type="EnsemblMetazoa" id="Y47D7A.16a.1">
    <property type="protein sequence ID" value="Y47D7A.16a.1"/>
    <property type="gene ID" value="WBGene00044637"/>
</dbReference>
<dbReference type="GeneID" id="3896860"/>
<dbReference type="KEGG" id="cel:CELE_Y47D7A.16"/>
<dbReference type="UCSC" id="Y47D7A.16">
    <property type="organism name" value="c. elegans"/>
</dbReference>
<dbReference type="AGR" id="WB:WBGene00044637"/>
<dbReference type="CTD" id="3896860"/>
<dbReference type="WormBase" id="Y47D7A.16a">
    <property type="protein sequence ID" value="CE47043"/>
    <property type="gene ID" value="WBGene00044637"/>
    <property type="gene designation" value="rft-1"/>
</dbReference>
<dbReference type="eggNOG" id="KOG4255">
    <property type="taxonomic scope" value="Eukaryota"/>
</dbReference>
<dbReference type="GeneTree" id="ENSGT00390000003774"/>
<dbReference type="HOGENOM" id="CLU_034789_1_0_1"/>
<dbReference type="InParanoid" id="Q3LFN0"/>
<dbReference type="OMA" id="EQRPMMD"/>
<dbReference type="OrthoDB" id="9995836at2759"/>
<dbReference type="PhylomeDB" id="Q3LFN0"/>
<dbReference type="Reactome" id="R-CEL-196843">
    <property type="pathway name" value="Vitamin B2 (riboflavin) metabolism"/>
</dbReference>
<dbReference type="PRO" id="PR:Q3LFN0"/>
<dbReference type="Proteomes" id="UP000001940">
    <property type="component" value="Chromosome V"/>
</dbReference>
<dbReference type="Bgee" id="WBGene00044637">
    <property type="expression patterns" value="Expressed in adult organism and 2 other cell types or tissues"/>
</dbReference>
<dbReference type="GO" id="GO:0005886">
    <property type="term" value="C:plasma membrane"/>
    <property type="evidence" value="ECO:0000318"/>
    <property type="project" value="GO_Central"/>
</dbReference>
<dbReference type="GO" id="GO:0032217">
    <property type="term" value="F:riboflavin transmembrane transporter activity"/>
    <property type="evidence" value="ECO:0000314"/>
    <property type="project" value="CACAO"/>
</dbReference>
<dbReference type="GO" id="GO:0009792">
    <property type="term" value="P:embryo development ending in birth or egg hatching"/>
    <property type="evidence" value="ECO:0000315"/>
    <property type="project" value="CACAO"/>
</dbReference>
<dbReference type="GO" id="GO:0032218">
    <property type="term" value="P:riboflavin transport"/>
    <property type="evidence" value="ECO:0000318"/>
    <property type="project" value="GO_Central"/>
</dbReference>
<dbReference type="InterPro" id="IPR009357">
    <property type="entry name" value="Riboflavin_transptr"/>
</dbReference>
<dbReference type="PANTHER" id="PTHR12929:SF3">
    <property type="entry name" value="RIBOFLAVIN TRANSPORTER RFT-1"/>
    <property type="match status" value="1"/>
</dbReference>
<dbReference type="PANTHER" id="PTHR12929">
    <property type="entry name" value="SOLUTE CARRIER FAMILY 52"/>
    <property type="match status" value="1"/>
</dbReference>
<dbReference type="Pfam" id="PF06237">
    <property type="entry name" value="SLC52_ribofla_tr"/>
    <property type="match status" value="1"/>
</dbReference>
<accession>Q3LFN0</accession>
<protein>
    <recommendedName>
        <fullName evidence="3">Riboflavin transporter rft-1</fullName>
    </recommendedName>
    <alternativeName>
        <fullName evidence="4">Solute carrier family 52, riboflavin transporter rft-1</fullName>
    </alternativeName>
</protein>
<gene>
    <name evidence="3 6" type="primary">rft-1</name>
    <name evidence="6" type="ORF">Y47D7A.16</name>
</gene>
<sequence>MKTFLFTFCLVAIFGSSSWIGTNSVWMELSLLTAKLPEGWNLPSYLSAIVQIACLGPLIYSIIHKGIKMTIPTVPLIFIFMVLACICQLGLCFFWDDTGYIFGAIRSWPLYLLLFGLAIVDAISSVLFLPFMAQFHPSFLNAYFVGMGLSALIPSLLSLIQGTSNYWCDDNKTPHYYPPRFSVSMFFLINFFFTCAAVAAFLVLYKIGAHKNSSQVEPEPKHSIQIIQGDSTTDVNEVNTESSFQETSSIPDSSSATGARLAFLLLTTALVNAQMNGIVTSVQSYATLVYSQNTYHYAVTLSNVISPLASYLQFFVKIRSLPILAFLTLCSSLTTAVIIYLAALSPNWIFNSETAGTIISIASSLIAAGLHSYLRVMFAALLREGNQKESRLFWCGAFIQIGSFTGSAIMFPLVNVWKLFHSAPSCR</sequence>
<keyword id="KW-1003">Cell membrane</keyword>
<keyword id="KW-0472">Membrane</keyword>
<keyword id="KW-1185">Reference proteome</keyword>
<keyword id="KW-0812">Transmembrane</keyword>
<keyword id="KW-1133">Transmembrane helix</keyword>
<keyword id="KW-0813">Transport</keyword>
<proteinExistence type="evidence at protein level"/>
<name>S52AA_CAEEL</name>
<organism evidence="5">
    <name type="scientific">Caenorhabditis elegans</name>
    <dbReference type="NCBI Taxonomy" id="6239"/>
    <lineage>
        <taxon>Eukaryota</taxon>
        <taxon>Metazoa</taxon>
        <taxon>Ecdysozoa</taxon>
        <taxon>Nematoda</taxon>
        <taxon>Chromadorea</taxon>
        <taxon>Rhabditida</taxon>
        <taxon>Rhabditina</taxon>
        <taxon>Rhabditomorpha</taxon>
        <taxon>Rhabditoidea</taxon>
        <taxon>Rhabditidae</taxon>
        <taxon>Peloderinae</taxon>
        <taxon>Caenorhabditis</taxon>
    </lineage>
</organism>
<comment type="function">
    <text evidence="2">Riboflavin transporter. Riboflavin transport is Na(+)-independent but pH-sensitive.</text>
</comment>
<comment type="catalytic activity">
    <reaction evidence="2">
        <text>riboflavin(in) = riboflavin(out)</text>
        <dbReference type="Rhea" id="RHEA:35015"/>
        <dbReference type="ChEBI" id="CHEBI:57986"/>
    </reaction>
</comment>
<comment type="activity regulation">
    <text evidence="2">Activity is strongly inhibited by riboflavin analogs, such as lumiflavin and lumichrome.</text>
</comment>
<comment type="biophysicochemical properties">
    <phDependence>
        <text evidence="2">Optimum pH is 5.</text>
    </phDependence>
</comment>
<comment type="subcellular location">
    <subcellularLocation>
        <location evidence="4">Cell membrane</location>
        <topology evidence="1">Multi-pass membrane protein</topology>
    </subcellularLocation>
</comment>
<comment type="tissue specificity">
    <text evidence="2">Expressed in intestine.</text>
</comment>
<comment type="developmental stage">
    <text evidence="2">Highly expressed at L1 larval stage and to a lesser extent in adults.</text>
</comment>
<comment type="induction">
    <text evidence="2">Down-regulated by high levels of riboflavin.</text>
</comment>
<comment type="disruption phenotype">
    <text evidence="2">RNAi-mediated knockdown causes a severe reduction in the number of laid eggs; the few laid eggs fail to hatch.</text>
</comment>
<comment type="similarity">
    <text evidence="4">Belongs to the riboflavin transporter family.</text>
</comment>
<reference evidence="5" key="1">
    <citation type="journal article" date="1998" name="Science">
        <title>Genome sequence of the nematode C. elegans: a platform for investigating biology.</title>
        <authorList>
            <consortium name="The C. elegans sequencing consortium"/>
        </authorList>
    </citation>
    <scope>NUCLEOTIDE SEQUENCE [LARGE SCALE GENOMIC DNA]</scope>
    <source>
        <strain evidence="5">Bristol N2</strain>
    </source>
</reference>
<reference evidence="4" key="2">
    <citation type="journal article" date="2013" name="PLoS ONE">
        <title>Identification and functional characterization of the Caenorhabditis elegans riboflavin transporters rft-1 and rft-2.</title>
        <authorList>
            <person name="Biswas A."/>
            <person name="Elmatari D."/>
            <person name="Rothman J."/>
            <person name="LaMunyon C.W."/>
            <person name="Said H.M."/>
        </authorList>
    </citation>
    <scope>FUNCTION</scope>
    <scope>CATALYTIC ACTIVITY</scope>
    <scope>BIOPHYSICOCHEMICAL PROPERTIES</scope>
    <scope>TISSUE SPECIFICITY</scope>
    <scope>DEVELOPMENTAL STAGE</scope>
    <scope>INDUCTION</scope>
    <scope>DISRUPTION PHENOTYPE</scope>
</reference>